<evidence type="ECO:0000250" key="1">
    <source>
        <dbReference type="UniProtKB" id="O75381"/>
    </source>
</evidence>
<evidence type="ECO:0000250" key="2">
    <source>
        <dbReference type="UniProtKB" id="P53112"/>
    </source>
</evidence>
<evidence type="ECO:0000250" key="3">
    <source>
        <dbReference type="UniProtKB" id="Q642G4"/>
    </source>
</evidence>
<evidence type="ECO:0000255" key="4"/>
<evidence type="ECO:0000256" key="5">
    <source>
        <dbReference type="SAM" id="MobiDB-lite"/>
    </source>
</evidence>
<evidence type="ECO:0000269" key="6">
    <source>
    </source>
</evidence>
<evidence type="ECO:0000269" key="7">
    <source>
    </source>
</evidence>
<evidence type="ECO:0000269" key="8">
    <source>
    </source>
</evidence>
<evidence type="ECO:0000269" key="9">
    <source>
    </source>
</evidence>
<evidence type="ECO:0000269" key="10">
    <source>
    </source>
</evidence>
<evidence type="ECO:0000269" key="11">
    <source>
    </source>
</evidence>
<evidence type="ECO:0000303" key="12">
    <source>
    </source>
</evidence>
<evidence type="ECO:0000305" key="13"/>
<proteinExistence type="evidence at protein level"/>
<name>PEX14_ARATH</name>
<sequence>MATHQQTQPPSDFPALADENSQIPEATKPANEVQQATIAQDPPTSVFKNSEPIREDQIQNAIKFLSHPRVRGSPVIHRRSFLERKGLTKEEIDEAFRRVPDPPPSSQTTVTTSQDGQQAVSTVQPQAMQPVVAAPAPLIVTPQAAFLSRFRWYHAILAVGVLAASGAGTAVFIKRSLIPRFKSWVQRIMLEEETDPLKKADAKPSLAEEAVAAAKAASAAASDVARVSQEMMITKNEERKYFEDLTHLLGVQVQEMKSLSNNIRKLEGQSNNIPKIYSADQEVYNGSVTTARKPYTNGSNVDYDTRSARSASPPAAPADSSAPPHPKSYMDIMSMIQRGEKPSNIREINDMPPNPNQPLSDPRIAPKSKPWDYGQAPQDESSNGQWWQQKNPRSTDFGYETTTAARFTANQNETSTMEPAAFQRQRSWVPPQPPPVAMAEAVEAIRRPKPQAKIDQEAAASDGQSGVSDELQKITKFSESGGDGSGGIKIAEIQEETEQQHISQEGN</sequence>
<protein>
    <recommendedName>
        <fullName evidence="13">Peroxisomal membrane protein PEX14</fullName>
    </recommendedName>
    <alternativeName>
        <fullName evidence="13">Peroxin-14</fullName>
        <shortName evidence="12">AtPEX14</shortName>
    </alternativeName>
    <alternativeName>
        <fullName>Peroxisome biogenesis protein 14</fullName>
    </alternativeName>
    <alternativeName>
        <fullName>Pex14p</fullName>
    </alternativeName>
    <alternativeName>
        <fullName>Protein PEROXISOME DEFECTIVE 2</fullName>
    </alternativeName>
</protein>
<organism>
    <name type="scientific">Arabidopsis thaliana</name>
    <name type="common">Mouse-ear cress</name>
    <dbReference type="NCBI Taxonomy" id="3702"/>
    <lineage>
        <taxon>Eukaryota</taxon>
        <taxon>Viridiplantae</taxon>
        <taxon>Streptophyta</taxon>
        <taxon>Embryophyta</taxon>
        <taxon>Tracheophyta</taxon>
        <taxon>Spermatophyta</taxon>
        <taxon>Magnoliopsida</taxon>
        <taxon>eudicotyledons</taxon>
        <taxon>Gunneridae</taxon>
        <taxon>Pentapetalae</taxon>
        <taxon>rosids</taxon>
        <taxon>malvids</taxon>
        <taxon>Brassicales</taxon>
        <taxon>Brassicaceae</taxon>
        <taxon>Camelineae</taxon>
        <taxon>Arabidopsis</taxon>
    </lineage>
</organism>
<feature type="chain" id="PRO_0000403360" description="Peroxisomal membrane protein PEX14">
    <location>
        <begin position="1"/>
        <end position="507"/>
    </location>
</feature>
<feature type="topological domain" description="Peroxisomal" evidence="13">
    <location>
        <begin position="1"/>
        <end position="152"/>
    </location>
</feature>
<feature type="transmembrane region" description="Helical" evidence="4">
    <location>
        <begin position="153"/>
        <end position="173"/>
    </location>
</feature>
<feature type="topological domain" description="Cytoplasmic" evidence="13">
    <location>
        <begin position="174"/>
        <end position="507"/>
    </location>
</feature>
<feature type="region of interest" description="Disordered" evidence="5">
    <location>
        <begin position="1"/>
        <end position="52"/>
    </location>
</feature>
<feature type="region of interest" description="Involved in interaction with PEX5" evidence="8">
    <location>
        <begin position="58"/>
        <end position="65"/>
    </location>
</feature>
<feature type="region of interest" description="Involved in interaction with PEX5" evidence="8">
    <location>
        <begin position="78"/>
        <end position="97"/>
    </location>
</feature>
<feature type="region of interest" description="Disordered" evidence="5">
    <location>
        <begin position="288"/>
        <end position="329"/>
    </location>
</feature>
<feature type="region of interest" description="Disordered" evidence="5">
    <location>
        <begin position="344"/>
        <end position="394"/>
    </location>
</feature>
<feature type="region of interest" description="Disordered" evidence="5">
    <location>
        <begin position="409"/>
        <end position="435"/>
    </location>
</feature>
<feature type="region of interest" description="Disordered" evidence="5">
    <location>
        <begin position="448"/>
        <end position="507"/>
    </location>
</feature>
<feature type="compositionally biased region" description="Polar residues" evidence="5">
    <location>
        <begin position="1"/>
        <end position="10"/>
    </location>
</feature>
<feature type="compositionally biased region" description="Polar residues" evidence="5">
    <location>
        <begin position="32"/>
        <end position="48"/>
    </location>
</feature>
<feature type="compositionally biased region" description="Polar residues" evidence="5">
    <location>
        <begin position="288"/>
        <end position="302"/>
    </location>
</feature>
<feature type="compositionally biased region" description="Low complexity" evidence="5">
    <location>
        <begin position="308"/>
        <end position="322"/>
    </location>
</feature>
<feature type="compositionally biased region" description="Polar residues" evidence="5">
    <location>
        <begin position="378"/>
        <end position="394"/>
    </location>
</feature>
<feature type="sequence conflict" description="In Ref. 1; CAC14740." evidence="13" ref="1">
    <original>RVRG</original>
    <variation>KVRS</variation>
    <location>
        <begin position="69"/>
        <end position="72"/>
    </location>
</feature>
<feature type="sequence conflict" description="In Ref. 1; CAC14740." evidence="13" ref="1">
    <original>Q</original>
    <variation>R</variation>
    <location>
        <position position="229"/>
    </location>
</feature>
<feature type="sequence conflict" description="In Ref. 2; BAB17667, 1; CAC14740 and 7; AAM65879." evidence="13" ref="2 1 7">
    <original>V</original>
    <variation>A</variation>
    <location>
        <position position="442"/>
    </location>
</feature>
<comment type="function">
    <text evidence="1 2 6 8 9 11">Component of the PEX13-PEX14 docking complex, a translocon channel that specifically mediates the import of peroxisomal cargo proteins bound to PEX5 receptor (PubMed:11060021, PubMed:11978862, PubMed:17478547, PubMed:19594707). The PEX13-PEX14 docking complex forms a large import pore which can be opened to a diameter of about 9 nm (By similarity). Mechanistically, PEX5 receptor along with cargo proteins associates with the PEX14 subunit of the PEX13-PEX14 docking complex in the cytosol, leading to the insertion of the receptor into the organelle membrane with the concomitant translocation of the cargo into the peroxisome matrix (By similarity).</text>
</comment>
<comment type="subunit">
    <text evidence="1 8">Interacts with PEX13; forming the PEX13-PEX14 docking complex (By similarity). Interacts with PEX5 (via WxxxF/Y motifs) (PubMed:11978862).</text>
</comment>
<comment type="interaction">
    <interactant intactId="EBI-9536455">
        <id>Q9FXT6</id>
    </interactant>
    <interactant intactId="EBI-993861">
        <id>Q9FMA3</id>
        <label>PEX5</label>
    </interactant>
    <organismsDiffer>false</organismsDiffer>
    <experiments>3</experiments>
</comment>
<comment type="subcellular location">
    <subcellularLocation>
        <location evidence="6">Peroxisome membrane</location>
        <topology evidence="3">Single-pass membrane protein</topology>
    </subcellularLocation>
</comment>
<comment type="tissue specificity">
    <text evidence="8">Expressed in flowers, siliques, leaves and roots.</text>
</comment>
<comment type="developmental stage">
    <text evidence="8">Expressed at the early stage of germination and during the conversion of glyoxysomes to peroxisomes.</text>
</comment>
<comment type="induction">
    <text evidence="7 10">By wounding and hydrogen peroxide, but not by jasmonate.</text>
</comment>
<comment type="similarity">
    <text evidence="13">Belongs to the peroxin-14 family.</text>
</comment>
<comment type="sequence caution" evidence="13">
    <conflict type="erroneous initiation">
        <sequence resource="EMBL-CDS" id="AAM20492"/>
    </conflict>
    <text>Truncated N-terminus.</text>
</comment>
<comment type="sequence caution" evidence="13">
    <conflict type="erroneous initiation">
        <sequence resource="EMBL-CDS" id="AAM65879"/>
    </conflict>
    <text>Truncated N-terminus.</text>
</comment>
<dbReference type="EMBL" id="AJ251524">
    <property type="protein sequence ID" value="CAC14740.1"/>
    <property type="molecule type" value="mRNA"/>
</dbReference>
<dbReference type="EMBL" id="AB037538">
    <property type="protein sequence ID" value="BAB17667.1"/>
    <property type="molecule type" value="Genomic_DNA"/>
</dbReference>
<dbReference type="EMBL" id="AB037539">
    <property type="protein sequence ID" value="BAB17668.1"/>
    <property type="molecule type" value="mRNA"/>
</dbReference>
<dbReference type="EMBL" id="AB009053">
    <property type="protein sequence ID" value="BAB10850.1"/>
    <property type="molecule type" value="Genomic_DNA"/>
</dbReference>
<dbReference type="EMBL" id="CP002688">
    <property type="protein sequence ID" value="AED97660.1"/>
    <property type="molecule type" value="Genomic_DNA"/>
</dbReference>
<dbReference type="EMBL" id="AK227047">
    <property type="protein sequence ID" value="BAE99107.1"/>
    <property type="molecule type" value="mRNA"/>
</dbReference>
<dbReference type="EMBL" id="AY099641">
    <property type="protein sequence ID" value="AAM20492.1"/>
    <property type="status" value="ALT_INIT"/>
    <property type="molecule type" value="mRNA"/>
</dbReference>
<dbReference type="EMBL" id="BT003409">
    <property type="protein sequence ID" value="AAO30072.1"/>
    <property type="molecule type" value="mRNA"/>
</dbReference>
<dbReference type="EMBL" id="AY088340">
    <property type="protein sequence ID" value="AAM65879.1"/>
    <property type="status" value="ALT_INIT"/>
    <property type="molecule type" value="mRNA"/>
</dbReference>
<dbReference type="RefSeq" id="NP_201087.3">
    <property type="nucleotide sequence ID" value="NM_125676.5"/>
</dbReference>
<dbReference type="SMR" id="Q9FXT6"/>
<dbReference type="BioGRID" id="21645">
    <property type="interactions" value="2"/>
</dbReference>
<dbReference type="ELM" id="Q9FXT6"/>
<dbReference type="FunCoup" id="Q9FXT6">
    <property type="interactions" value="2048"/>
</dbReference>
<dbReference type="IntAct" id="Q9FXT6">
    <property type="interactions" value="2"/>
</dbReference>
<dbReference type="MINT" id="Q9FXT6"/>
<dbReference type="STRING" id="3702.Q9FXT6"/>
<dbReference type="TCDB" id="3.A.20.1.2">
    <property type="family name" value="the peroxisomal protein importer (ppi) family"/>
</dbReference>
<dbReference type="GlyGen" id="Q9FXT6">
    <property type="glycosylation" value="2 sites, 1 O-linked glycan (2 sites)"/>
</dbReference>
<dbReference type="iPTMnet" id="Q9FXT6"/>
<dbReference type="PaxDb" id="3702-AT5G62810.1"/>
<dbReference type="ProteomicsDB" id="236309"/>
<dbReference type="EnsemblPlants" id="AT5G62810.1">
    <property type="protein sequence ID" value="AT5G62810.1"/>
    <property type="gene ID" value="AT5G62810"/>
</dbReference>
<dbReference type="GeneID" id="836402"/>
<dbReference type="Gramene" id="AT5G62810.1">
    <property type="protein sequence ID" value="AT5G62810.1"/>
    <property type="gene ID" value="AT5G62810"/>
</dbReference>
<dbReference type="KEGG" id="ath:AT5G62810"/>
<dbReference type="Araport" id="AT5G62810"/>
<dbReference type="TAIR" id="AT5G62810">
    <property type="gene designation" value="PEX14"/>
</dbReference>
<dbReference type="eggNOG" id="KOG2629">
    <property type="taxonomic scope" value="Eukaryota"/>
</dbReference>
<dbReference type="HOGENOM" id="CLU_038637_0_0_1"/>
<dbReference type="InParanoid" id="Q9FXT6"/>
<dbReference type="OMA" id="FHWSHAI"/>
<dbReference type="PhylomeDB" id="Q9FXT6"/>
<dbReference type="PRO" id="PR:Q9FXT6"/>
<dbReference type="Proteomes" id="UP000006548">
    <property type="component" value="Chromosome 5"/>
</dbReference>
<dbReference type="ExpressionAtlas" id="Q9FXT6">
    <property type="expression patterns" value="baseline and differential"/>
</dbReference>
<dbReference type="GO" id="GO:0005829">
    <property type="term" value="C:cytosol"/>
    <property type="evidence" value="ECO:0000314"/>
    <property type="project" value="TAIR"/>
</dbReference>
<dbReference type="GO" id="GO:0005739">
    <property type="term" value="C:mitochondrion"/>
    <property type="evidence" value="ECO:0007005"/>
    <property type="project" value="TAIR"/>
</dbReference>
<dbReference type="GO" id="GO:0005778">
    <property type="term" value="C:peroxisomal membrane"/>
    <property type="evidence" value="ECO:0007669"/>
    <property type="project" value="UniProtKB-SubCell"/>
</dbReference>
<dbReference type="GO" id="GO:0005777">
    <property type="term" value="C:peroxisome"/>
    <property type="evidence" value="ECO:0000314"/>
    <property type="project" value="TAIR"/>
</dbReference>
<dbReference type="GO" id="GO:0009536">
    <property type="term" value="C:plastid"/>
    <property type="evidence" value="ECO:0007005"/>
    <property type="project" value="TAIR"/>
</dbReference>
<dbReference type="GO" id="GO:0007031">
    <property type="term" value="P:peroxisome organization"/>
    <property type="evidence" value="ECO:0000315"/>
    <property type="project" value="TAIR"/>
</dbReference>
<dbReference type="GO" id="GO:0016560">
    <property type="term" value="P:protein import into peroxisome matrix, docking"/>
    <property type="evidence" value="ECO:0007669"/>
    <property type="project" value="InterPro"/>
</dbReference>
<dbReference type="GO" id="GO:0006625">
    <property type="term" value="P:protein targeting to peroxisome"/>
    <property type="evidence" value="ECO:0000304"/>
    <property type="project" value="TAIR"/>
</dbReference>
<dbReference type="FunFam" id="1.10.10.10:FF:000217">
    <property type="entry name" value="Peroxisomal membrane protein PEX14"/>
    <property type="match status" value="1"/>
</dbReference>
<dbReference type="Gene3D" id="1.10.10.10">
    <property type="entry name" value="Winged helix-like DNA-binding domain superfamily/Winged helix DNA-binding domain"/>
    <property type="match status" value="1"/>
</dbReference>
<dbReference type="InterPro" id="IPR040554">
    <property type="entry name" value="KPWE_PEX14_dom"/>
</dbReference>
<dbReference type="InterPro" id="IPR025655">
    <property type="entry name" value="PEX14"/>
</dbReference>
<dbReference type="InterPro" id="IPR054154">
    <property type="entry name" value="PEX14-like_M_plants"/>
</dbReference>
<dbReference type="InterPro" id="IPR006785">
    <property type="entry name" value="Pex14_N"/>
</dbReference>
<dbReference type="InterPro" id="IPR036388">
    <property type="entry name" value="WH-like_DNA-bd_sf"/>
</dbReference>
<dbReference type="PANTHER" id="PTHR23058">
    <property type="entry name" value="PEROXISOMAL MEMBRANE PROTEIN PEX14"/>
    <property type="match status" value="1"/>
</dbReference>
<dbReference type="PANTHER" id="PTHR23058:SF0">
    <property type="entry name" value="PEROXISOMAL MEMBRANE PROTEIN PEX14"/>
    <property type="match status" value="1"/>
</dbReference>
<dbReference type="Pfam" id="PF17733">
    <property type="entry name" value="KPWE_dom"/>
    <property type="match status" value="1"/>
</dbReference>
<dbReference type="Pfam" id="PF23020">
    <property type="entry name" value="PEX14-like_2nd"/>
    <property type="match status" value="1"/>
</dbReference>
<dbReference type="Pfam" id="PF04695">
    <property type="entry name" value="Pex14_N"/>
    <property type="match status" value="1"/>
</dbReference>
<gene>
    <name evidence="12" type="primary">PEX14</name>
    <name type="synonym">PED2</name>
    <name type="ordered locus">At5g62810</name>
    <name type="ORF">MQB2.13</name>
</gene>
<reference key="1">
    <citation type="submission" date="1999-12" db="EMBL/GenBank/DDBJ databases">
        <title>The peroxin PEX14 from higher plants. Cloning, expression, localisation and topology.</title>
        <authorList>
            <person name="Oh J."/>
            <person name="Lopez-Huertas E."/>
            <person name="Charlton W."/>
            <person name="Baker A."/>
        </authorList>
    </citation>
    <scope>NUCLEOTIDE SEQUENCE [MRNA]</scope>
</reference>
<reference key="2">
    <citation type="journal article" date="2000" name="EMBO J.">
        <title>AtPex14p maintains peroxisomal functions by determining protein targeting to three kinds of plant peroxisomes.</title>
        <authorList>
            <person name="Hayashi M."/>
            <person name="Nito K."/>
            <person name="Toriyama-Kato K."/>
            <person name="Kondo M."/>
            <person name="Yamaya T."/>
            <person name="Nishimura M."/>
        </authorList>
    </citation>
    <scope>NUCLEOTIDE SEQUENCE [GENOMIC DNA / MRNA]</scope>
    <scope>FUNCTION</scope>
    <scope>SUBCELLULAR LOCATION</scope>
</reference>
<reference key="3">
    <citation type="journal article" date="1998" name="DNA Res.">
        <title>Structural analysis of Arabidopsis thaliana chromosome 5. IV. Sequence features of the regions of 1,456,315 bp covered by nineteen physically assigned P1 and TAC clones.</title>
        <authorList>
            <person name="Sato S."/>
            <person name="Kaneko T."/>
            <person name="Kotani H."/>
            <person name="Nakamura Y."/>
            <person name="Asamizu E."/>
            <person name="Miyajima N."/>
            <person name="Tabata S."/>
        </authorList>
    </citation>
    <scope>NUCLEOTIDE SEQUENCE [LARGE SCALE GENOMIC DNA]</scope>
    <source>
        <strain>cv. Columbia</strain>
    </source>
</reference>
<reference key="4">
    <citation type="journal article" date="2017" name="Plant J.">
        <title>Araport11: a complete reannotation of the Arabidopsis thaliana reference genome.</title>
        <authorList>
            <person name="Cheng C.Y."/>
            <person name="Krishnakumar V."/>
            <person name="Chan A.P."/>
            <person name="Thibaud-Nissen F."/>
            <person name="Schobel S."/>
            <person name="Town C.D."/>
        </authorList>
    </citation>
    <scope>GENOME REANNOTATION</scope>
    <source>
        <strain>cv. Columbia</strain>
    </source>
</reference>
<reference key="5">
    <citation type="submission" date="2006-07" db="EMBL/GenBank/DDBJ databases">
        <title>Large-scale analysis of RIKEN Arabidopsis full-length (RAFL) cDNAs.</title>
        <authorList>
            <person name="Totoki Y."/>
            <person name="Seki M."/>
            <person name="Ishida J."/>
            <person name="Nakajima M."/>
            <person name="Enju A."/>
            <person name="Kamiya A."/>
            <person name="Narusaka M."/>
            <person name="Shin-i T."/>
            <person name="Nakagawa M."/>
            <person name="Sakamoto N."/>
            <person name="Oishi K."/>
            <person name="Kohara Y."/>
            <person name="Kobayashi M."/>
            <person name="Toyoda A."/>
            <person name="Sakaki Y."/>
            <person name="Sakurai T."/>
            <person name="Iida K."/>
            <person name="Akiyama K."/>
            <person name="Satou M."/>
            <person name="Toyoda T."/>
            <person name="Konagaya A."/>
            <person name="Carninci P."/>
            <person name="Kawai J."/>
            <person name="Hayashizaki Y."/>
            <person name="Shinozaki K."/>
        </authorList>
    </citation>
    <scope>NUCLEOTIDE SEQUENCE [LARGE SCALE MRNA]</scope>
    <source>
        <strain>cv. Columbia</strain>
    </source>
</reference>
<reference key="6">
    <citation type="journal article" date="2003" name="Science">
        <title>Empirical analysis of transcriptional activity in the Arabidopsis genome.</title>
        <authorList>
            <person name="Yamada K."/>
            <person name="Lim J."/>
            <person name="Dale J.M."/>
            <person name="Chen H."/>
            <person name="Shinn P."/>
            <person name="Palm C.J."/>
            <person name="Southwick A.M."/>
            <person name="Wu H.C."/>
            <person name="Kim C.J."/>
            <person name="Nguyen M."/>
            <person name="Pham P.K."/>
            <person name="Cheuk R.F."/>
            <person name="Karlin-Newmann G."/>
            <person name="Liu S.X."/>
            <person name="Lam B."/>
            <person name="Sakano H."/>
            <person name="Wu T."/>
            <person name="Yu G."/>
            <person name="Miranda M."/>
            <person name="Quach H.L."/>
            <person name="Tripp M."/>
            <person name="Chang C.H."/>
            <person name="Lee J.M."/>
            <person name="Toriumi M.J."/>
            <person name="Chan M.M."/>
            <person name="Tang C.C."/>
            <person name="Onodera C.S."/>
            <person name="Deng J.M."/>
            <person name="Akiyama K."/>
            <person name="Ansari Y."/>
            <person name="Arakawa T."/>
            <person name="Banh J."/>
            <person name="Banno F."/>
            <person name="Bowser L."/>
            <person name="Brooks S.Y."/>
            <person name="Carninci P."/>
            <person name="Chao Q."/>
            <person name="Choy N."/>
            <person name="Enju A."/>
            <person name="Goldsmith A.D."/>
            <person name="Gurjal M."/>
            <person name="Hansen N.F."/>
            <person name="Hayashizaki Y."/>
            <person name="Johnson-Hopson C."/>
            <person name="Hsuan V.W."/>
            <person name="Iida K."/>
            <person name="Karnes M."/>
            <person name="Khan S."/>
            <person name="Koesema E."/>
            <person name="Ishida J."/>
            <person name="Jiang P.X."/>
            <person name="Jones T."/>
            <person name="Kawai J."/>
            <person name="Kamiya A."/>
            <person name="Meyers C."/>
            <person name="Nakajima M."/>
            <person name="Narusaka M."/>
            <person name="Seki M."/>
            <person name="Sakurai T."/>
            <person name="Satou M."/>
            <person name="Tamse R."/>
            <person name="Vaysberg M."/>
            <person name="Wallender E.K."/>
            <person name="Wong C."/>
            <person name="Yamamura Y."/>
            <person name="Yuan S."/>
            <person name="Shinozaki K."/>
            <person name="Davis R.W."/>
            <person name="Theologis A."/>
            <person name="Ecker J.R."/>
        </authorList>
    </citation>
    <scope>NUCLEOTIDE SEQUENCE [LARGE SCALE MRNA] OF 113-507</scope>
    <source>
        <strain>cv. Columbia</strain>
    </source>
</reference>
<reference key="7">
    <citation type="submission" date="2002-03" db="EMBL/GenBank/DDBJ databases">
        <title>Full-length cDNA from Arabidopsis thaliana.</title>
        <authorList>
            <person name="Brover V.V."/>
            <person name="Troukhan M.E."/>
            <person name="Alexandrov N.A."/>
            <person name="Lu Y.-P."/>
            <person name="Flavell R.B."/>
            <person name="Feldmann K.A."/>
        </authorList>
    </citation>
    <scope>NUCLEOTIDE SEQUENCE [LARGE SCALE MRNA] OF 254-507</scope>
</reference>
<reference key="8">
    <citation type="journal article" date="2000" name="EMBO J.">
        <title>Stress induces peroxisome biogenesis genes.</title>
        <authorList>
            <person name="Lopez-Huertas E."/>
            <person name="Charlton W.L."/>
            <person name="Johnson B."/>
            <person name="Graham I.A."/>
            <person name="Baker A."/>
        </authorList>
    </citation>
    <scope>INDUCTION BY HYDROGEN PEROXIDE</scope>
    <source>
        <strain>cv. Columbia</strain>
    </source>
</reference>
<reference key="9">
    <citation type="journal article" date="2002" name="Plant Cell Physiol.">
        <title>Direct interaction and determination of binding domains among peroxisomal import factors in Arabidopsis thaliana.</title>
        <authorList>
            <person name="Nito K."/>
            <person name="Hayashi M."/>
            <person name="Nishimura M."/>
        </authorList>
    </citation>
    <scope>FUNCTION</scope>
    <scope>INTERACTION WITH PEX5; PEX7 AND PTS1-CONTAINING PROTEINS</scope>
    <scope>TISSUE SPECIFICITY</scope>
    <scope>DEVELOPMENTAL STAGE</scope>
</reference>
<reference key="10">
    <citation type="journal article" date="2007" name="Plant Cell">
        <title>Proteome analysis of Arabidopsis leaf peroxisomes reveals novel targeting peptides, metabolic pathways, and defense mechanisms.</title>
        <authorList>
            <person name="Reumann S."/>
            <person name="Babujee L."/>
            <person name="Ma C."/>
            <person name="Wienkoop S."/>
            <person name="Siemsen T."/>
            <person name="Antonicelli G.E."/>
            <person name="Rasche N."/>
            <person name="Lueder F."/>
            <person name="Weckwerth W."/>
            <person name="Jahn O."/>
        </authorList>
    </citation>
    <scope>IDENTIFICATION BY MASS SPECTROMETRY</scope>
</reference>
<reference key="11">
    <citation type="journal article" date="2007" name="Plant Cell Physiol.">
        <title>Functional classification of Arabidopsis peroxisome biogenesis factors proposed from analyses of knockdown mutants.</title>
        <authorList>
            <person name="Nito K."/>
            <person name="Kamigaki A."/>
            <person name="Kondo M."/>
            <person name="Hayashi M."/>
            <person name="Nishimura M."/>
        </authorList>
    </citation>
    <scope>FUNCTION</scope>
</reference>
<reference key="12">
    <citation type="journal article" date="2008" name="Plant Cell Environ.">
        <title>Peroxisome proliferation, wound-activated responses and expression of peroxisome-associated genes are cross-regulated but uncoupled in Arabidopsis thaliana.</title>
        <authorList>
            <person name="Castillo M.C."/>
            <person name="Sandalio L.M."/>
            <person name="Del Rio L.A."/>
            <person name="Leon J."/>
        </authorList>
    </citation>
    <scope>INDUCTION BY WOUNDING AND JASMONATE</scope>
</reference>
<reference key="13">
    <citation type="journal article" date="2009" name="J. Proteomics">
        <title>Phosphoproteomic analysis of nuclei-enriched fractions from Arabidopsis thaliana.</title>
        <authorList>
            <person name="Jones A.M.E."/>
            <person name="MacLean D."/>
            <person name="Studholme D.J."/>
            <person name="Serna-Sanz A."/>
            <person name="Andreasson E."/>
            <person name="Rathjen J.P."/>
            <person name="Peck S.C."/>
        </authorList>
    </citation>
    <scope>IDENTIFICATION BY MASS SPECTROMETRY [LARGE SCALE ANALYSIS]</scope>
    <source>
        <strain>cv. Columbia</strain>
    </source>
</reference>
<reference key="14">
    <citation type="journal article" date="2009" name="Plant J.">
        <title>Molecular components required for the targeting of PEX7 to peroxisomes in Arabidopsis thaliana.</title>
        <authorList>
            <person name="Singh T."/>
            <person name="Hayashi M."/>
            <person name="Mano S."/>
            <person name="Arai Y."/>
            <person name="Goto S."/>
            <person name="Nishimura M."/>
        </authorList>
    </citation>
    <scope>FUNCTION</scope>
</reference>
<reference key="15">
    <citation type="journal article" date="2009" name="Plant Physiol.">
        <title>Large-scale Arabidopsis phosphoproteome profiling reveals novel chloroplast kinase substrates and phosphorylation networks.</title>
        <authorList>
            <person name="Reiland S."/>
            <person name="Messerli G."/>
            <person name="Baerenfaller K."/>
            <person name="Gerrits B."/>
            <person name="Endler A."/>
            <person name="Grossmann J."/>
            <person name="Gruissem W."/>
            <person name="Baginsky S."/>
        </authorList>
    </citation>
    <scope>IDENTIFICATION BY MASS SPECTROMETRY [LARGE SCALE ANALYSIS]</scope>
</reference>
<accession>Q9FXT6</accession>
<accession>Q8L620</accession>
<accession>Q8L9N2</accession>
<accession>Q9FE40</accession>
<accession>Q9FT86</accession>
<keyword id="KW-0472">Membrane</keyword>
<keyword id="KW-0576">Peroxisome</keyword>
<keyword id="KW-0962">Peroxisome biogenesis</keyword>
<keyword id="KW-0653">Protein transport</keyword>
<keyword id="KW-1185">Reference proteome</keyword>
<keyword id="KW-0811">Translocation</keyword>
<keyword id="KW-0812">Transmembrane</keyword>
<keyword id="KW-1133">Transmembrane helix</keyword>
<keyword id="KW-0813">Transport</keyword>